<dbReference type="EC" id="7.1.1.2" evidence="1"/>
<dbReference type="EMBL" id="X79547">
    <property type="protein sequence ID" value="CAA56088.1"/>
    <property type="molecule type" value="Genomic_DNA"/>
</dbReference>
<dbReference type="PIR" id="T11866">
    <property type="entry name" value="T11866"/>
</dbReference>
<dbReference type="RefSeq" id="NP_007169.1">
    <property type="nucleotide sequence ID" value="NC_001640.1"/>
</dbReference>
<dbReference type="SMR" id="P48655"/>
<dbReference type="FunCoup" id="P48655">
    <property type="interactions" value="137"/>
</dbReference>
<dbReference type="STRING" id="9796.ENSECAP00000023109"/>
<dbReference type="PaxDb" id="9796-ENSECAP00000023109"/>
<dbReference type="Ensembl" id="ENSECAT00000029858.1">
    <property type="protein sequence ID" value="ENSECAP00000023109.1"/>
    <property type="gene ID" value="ENSECAG00000027675.1"/>
</dbReference>
<dbReference type="KEGG" id="ecb:807852"/>
<dbReference type="VGNC" id="VGNC:59019">
    <property type="gene designation" value="MT-ND4"/>
</dbReference>
<dbReference type="GeneTree" id="ENSGT00730000111316"/>
<dbReference type="HOGENOM" id="CLU_007100_4_0_1"/>
<dbReference type="InParanoid" id="P48655"/>
<dbReference type="OMA" id="ITRWGNQ"/>
<dbReference type="OrthoDB" id="564260at2759"/>
<dbReference type="Proteomes" id="UP000002281">
    <property type="component" value="Mitochondrion"/>
</dbReference>
<dbReference type="Bgee" id="ENSECAG00000027675">
    <property type="expression patterns" value="Expressed in prefrontal cortex and 23 other cell types or tissues"/>
</dbReference>
<dbReference type="GO" id="GO:0005743">
    <property type="term" value="C:mitochondrial inner membrane"/>
    <property type="evidence" value="ECO:0000250"/>
    <property type="project" value="UniProtKB"/>
</dbReference>
<dbReference type="GO" id="GO:0045271">
    <property type="term" value="C:respiratory chain complex I"/>
    <property type="evidence" value="ECO:0000318"/>
    <property type="project" value="GO_Central"/>
</dbReference>
<dbReference type="GO" id="GO:0008137">
    <property type="term" value="F:NADH dehydrogenase (ubiquinone) activity"/>
    <property type="evidence" value="ECO:0000250"/>
    <property type="project" value="UniProtKB"/>
</dbReference>
<dbReference type="GO" id="GO:0048039">
    <property type="term" value="F:ubiquinone binding"/>
    <property type="evidence" value="ECO:0000318"/>
    <property type="project" value="GO_Central"/>
</dbReference>
<dbReference type="GO" id="GO:0009060">
    <property type="term" value="P:aerobic respiration"/>
    <property type="evidence" value="ECO:0000318"/>
    <property type="project" value="GO_Central"/>
</dbReference>
<dbReference type="GO" id="GO:0015990">
    <property type="term" value="P:electron transport coupled proton transport"/>
    <property type="evidence" value="ECO:0000318"/>
    <property type="project" value="GO_Central"/>
</dbReference>
<dbReference type="GO" id="GO:0006120">
    <property type="term" value="P:mitochondrial electron transport, NADH to ubiquinone"/>
    <property type="evidence" value="ECO:0000250"/>
    <property type="project" value="UniProtKB"/>
</dbReference>
<dbReference type="GO" id="GO:0032981">
    <property type="term" value="P:mitochondrial respiratory chain complex I assembly"/>
    <property type="evidence" value="ECO:0000250"/>
    <property type="project" value="UniProtKB"/>
</dbReference>
<dbReference type="InterPro" id="IPR000260">
    <property type="entry name" value="NADH4_N"/>
</dbReference>
<dbReference type="InterPro" id="IPR010227">
    <property type="entry name" value="NADH_Q_OxRdtase_chainM/4"/>
</dbReference>
<dbReference type="InterPro" id="IPR003918">
    <property type="entry name" value="NADH_UbQ_OxRdtase"/>
</dbReference>
<dbReference type="InterPro" id="IPR001750">
    <property type="entry name" value="ND/Mrp_TM"/>
</dbReference>
<dbReference type="NCBIfam" id="TIGR01972">
    <property type="entry name" value="NDH_I_M"/>
    <property type="match status" value="1"/>
</dbReference>
<dbReference type="PANTHER" id="PTHR43507">
    <property type="entry name" value="NADH-UBIQUINONE OXIDOREDUCTASE CHAIN 4"/>
    <property type="match status" value="1"/>
</dbReference>
<dbReference type="PANTHER" id="PTHR43507:SF20">
    <property type="entry name" value="NADH-UBIQUINONE OXIDOREDUCTASE CHAIN 4"/>
    <property type="match status" value="1"/>
</dbReference>
<dbReference type="Pfam" id="PF01059">
    <property type="entry name" value="Oxidored_q5_N"/>
    <property type="match status" value="1"/>
</dbReference>
<dbReference type="Pfam" id="PF00361">
    <property type="entry name" value="Proton_antipo_M"/>
    <property type="match status" value="1"/>
</dbReference>
<dbReference type="PRINTS" id="PR01437">
    <property type="entry name" value="NUOXDRDTASE4"/>
</dbReference>
<keyword id="KW-0249">Electron transport</keyword>
<keyword id="KW-0472">Membrane</keyword>
<keyword id="KW-0496">Mitochondrion</keyword>
<keyword id="KW-0999">Mitochondrion inner membrane</keyword>
<keyword id="KW-0520">NAD</keyword>
<keyword id="KW-1185">Reference proteome</keyword>
<keyword id="KW-0679">Respiratory chain</keyword>
<keyword id="KW-1278">Translocase</keyword>
<keyword id="KW-0812">Transmembrane</keyword>
<keyword id="KW-1133">Transmembrane helix</keyword>
<keyword id="KW-0813">Transport</keyword>
<keyword id="KW-0830">Ubiquinone</keyword>
<organism>
    <name type="scientific">Equus caballus</name>
    <name type="common">Horse</name>
    <dbReference type="NCBI Taxonomy" id="9796"/>
    <lineage>
        <taxon>Eukaryota</taxon>
        <taxon>Metazoa</taxon>
        <taxon>Chordata</taxon>
        <taxon>Craniata</taxon>
        <taxon>Vertebrata</taxon>
        <taxon>Euteleostomi</taxon>
        <taxon>Mammalia</taxon>
        <taxon>Eutheria</taxon>
        <taxon>Laurasiatheria</taxon>
        <taxon>Perissodactyla</taxon>
        <taxon>Equidae</taxon>
        <taxon>Equus</taxon>
    </lineage>
</organism>
<proteinExistence type="inferred from homology"/>
<name>NU4M_HORSE</name>
<comment type="function">
    <text evidence="1">Core subunit of the mitochondrial membrane respiratory chain NADH dehydrogenase (Complex I) which catalyzes electron transfer from NADH through the respiratory chain, using ubiquinone as an electron acceptor. Essential for the catalytic activity and assembly of complex I.</text>
</comment>
<comment type="catalytic activity">
    <reaction evidence="1">
        <text>a ubiquinone + NADH + 5 H(+)(in) = a ubiquinol + NAD(+) + 4 H(+)(out)</text>
        <dbReference type="Rhea" id="RHEA:29091"/>
        <dbReference type="Rhea" id="RHEA-COMP:9565"/>
        <dbReference type="Rhea" id="RHEA-COMP:9566"/>
        <dbReference type="ChEBI" id="CHEBI:15378"/>
        <dbReference type="ChEBI" id="CHEBI:16389"/>
        <dbReference type="ChEBI" id="CHEBI:17976"/>
        <dbReference type="ChEBI" id="CHEBI:57540"/>
        <dbReference type="ChEBI" id="CHEBI:57945"/>
        <dbReference type="EC" id="7.1.1.2"/>
    </reaction>
</comment>
<comment type="subunit">
    <text evidence="2">Core subunit of respiratory chain NADH dehydrogenase (Complex I) which is composed of 45 different subunits.</text>
</comment>
<comment type="subcellular location">
    <subcellularLocation>
        <location evidence="2">Mitochondrion inner membrane</location>
        <topology evidence="3">Multi-pass membrane protein</topology>
    </subcellularLocation>
</comment>
<comment type="similarity">
    <text evidence="4">Belongs to the complex I subunit 4 family.</text>
</comment>
<sequence>MLKIIIPTIMLMPLTWLSKKNMIWINTTTYSLLISLISLSLLNQPSNNSLNFSLMFFSDPLSAPLLVLTTWLLPLMLMASQHHLSKEPLIRKKLYITMLTMLQTFLIMTFTATELISFYILFEATLVPTLIIITRWGNQTERLNAGLYFLFYTLMGSLPLLVALISIQNLTGSLNFLLIQYWNQALPDSWSNIFLWLACMMAFMVKMPVYGLHLWLPKAHVEAPIAGSMVLAAILLKLGGYGMLRITTMLNPQTSFMAYPFLMLSLWGMIMTSSICLRQTDLKSLIAYSSVSHMALVIVAVLIQTPWSYMGATALMIAHGLTSSMLFCLANSNYERTHSRTMILARGLQTLLPLMAAWWLLASLTNLALPPSINLIGELFVVMSSFSWSNITIILMGANITITALYSLYMLITTQRGKYTHHINSIKPSFTRENALMALHMTPLLLLSLNPKIILGFTY</sequence>
<geneLocation type="mitochondrion"/>
<accession>P48655</accession>
<gene>
    <name type="primary">MT-ND4</name>
    <name type="synonym">MTND4</name>
    <name type="synonym">NADH4</name>
    <name type="synonym">ND4</name>
</gene>
<feature type="chain" id="PRO_0000117941" description="NADH-ubiquinone oxidoreductase chain 4">
    <location>
        <begin position="1"/>
        <end position="459"/>
    </location>
</feature>
<feature type="transmembrane region" description="Helical" evidence="3">
    <location>
        <begin position="22"/>
        <end position="42"/>
    </location>
</feature>
<feature type="transmembrane region" description="Helical" evidence="3">
    <location>
        <begin position="60"/>
        <end position="80"/>
    </location>
</feature>
<feature type="transmembrane region" description="Helical" evidence="3">
    <location>
        <begin position="95"/>
        <end position="112"/>
    </location>
</feature>
<feature type="transmembrane region" description="Helical" evidence="3">
    <location>
        <begin position="113"/>
        <end position="133"/>
    </location>
</feature>
<feature type="transmembrane region" description="Helical" evidence="3">
    <location>
        <begin position="147"/>
        <end position="167"/>
    </location>
</feature>
<feature type="transmembrane region" description="Helical" evidence="3">
    <location>
        <begin position="193"/>
        <end position="213"/>
    </location>
</feature>
<feature type="transmembrane region" description="Helical" evidence="3">
    <location>
        <begin position="224"/>
        <end position="244"/>
    </location>
</feature>
<feature type="transmembrane region" description="Helical" evidence="3">
    <location>
        <begin position="256"/>
        <end position="276"/>
    </location>
</feature>
<feature type="transmembrane region" description="Helical" evidence="3">
    <location>
        <begin position="284"/>
        <end position="303"/>
    </location>
</feature>
<feature type="transmembrane region" description="Helical" evidence="3">
    <location>
        <begin position="308"/>
        <end position="330"/>
    </location>
</feature>
<feature type="transmembrane region" description="Helical" evidence="3">
    <location>
        <begin position="351"/>
        <end position="371"/>
    </location>
</feature>
<feature type="transmembrane region" description="Helical" evidence="3">
    <location>
        <begin position="391"/>
        <end position="411"/>
    </location>
</feature>
<reference key="1">
    <citation type="journal article" date="1994" name="Gene">
        <title>The complete mitochondrial DNA sequence of the horse, Equus caballus: extensive heteroplasmy of the control region.</title>
        <authorList>
            <person name="Xu X."/>
            <person name="Arnason U."/>
        </authorList>
    </citation>
    <scope>NUCLEOTIDE SEQUENCE [LARGE SCALE GENOMIC DNA]</scope>
    <source>
        <strain evidence="5">Thoroughbred</strain>
    </source>
</reference>
<protein>
    <recommendedName>
        <fullName>NADH-ubiquinone oxidoreductase chain 4</fullName>
        <ecNumber evidence="1">7.1.1.2</ecNumber>
    </recommendedName>
    <alternativeName>
        <fullName>NADH dehydrogenase subunit 4</fullName>
    </alternativeName>
</protein>
<evidence type="ECO:0000250" key="1">
    <source>
        <dbReference type="UniProtKB" id="P03905"/>
    </source>
</evidence>
<evidence type="ECO:0000250" key="2">
    <source>
        <dbReference type="UniProtKB" id="P03910"/>
    </source>
</evidence>
<evidence type="ECO:0000255" key="3"/>
<evidence type="ECO:0000305" key="4"/>
<evidence type="ECO:0000312" key="5">
    <source>
        <dbReference type="Proteomes" id="UP000002281"/>
    </source>
</evidence>